<name>MURA_PSEPF</name>
<protein>
    <recommendedName>
        <fullName evidence="1">UDP-N-acetylglucosamine 1-carboxyvinyltransferase</fullName>
        <ecNumber evidence="1">2.5.1.7</ecNumber>
    </recommendedName>
    <alternativeName>
        <fullName evidence="1">Enoylpyruvate transferase</fullName>
    </alternativeName>
    <alternativeName>
        <fullName evidence="1">UDP-N-acetylglucosamine enolpyruvyl transferase</fullName>
        <shortName evidence="1">EPT</shortName>
    </alternativeName>
</protein>
<proteinExistence type="inferred from homology"/>
<evidence type="ECO:0000255" key="1">
    <source>
        <dbReference type="HAMAP-Rule" id="MF_00111"/>
    </source>
</evidence>
<reference key="1">
    <citation type="journal article" date="2009" name="Genome Biol.">
        <title>Genomic and genetic analyses of diversity and plant interactions of Pseudomonas fluorescens.</title>
        <authorList>
            <person name="Silby M.W."/>
            <person name="Cerdeno-Tarraga A.M."/>
            <person name="Vernikos G.S."/>
            <person name="Giddens S.R."/>
            <person name="Jackson R.W."/>
            <person name="Preston G.M."/>
            <person name="Zhang X.-X."/>
            <person name="Moon C.D."/>
            <person name="Gehrig S.M."/>
            <person name="Godfrey S.A.C."/>
            <person name="Knight C.G."/>
            <person name="Malone J.G."/>
            <person name="Robinson Z."/>
            <person name="Spiers A.J."/>
            <person name="Harris S."/>
            <person name="Challis G.L."/>
            <person name="Yaxley A.M."/>
            <person name="Harris D."/>
            <person name="Seeger K."/>
            <person name="Murphy L."/>
            <person name="Rutter S."/>
            <person name="Squares R."/>
            <person name="Quail M.A."/>
            <person name="Saunders E."/>
            <person name="Mavromatis K."/>
            <person name="Brettin T.S."/>
            <person name="Bentley S.D."/>
            <person name="Hothersall J."/>
            <person name="Stephens E."/>
            <person name="Thomas C.M."/>
            <person name="Parkhill J."/>
            <person name="Levy S.B."/>
            <person name="Rainey P.B."/>
            <person name="Thomson N.R."/>
        </authorList>
    </citation>
    <scope>NUCLEOTIDE SEQUENCE [LARGE SCALE GENOMIC DNA]</scope>
    <source>
        <strain>Pf0-1</strain>
    </source>
</reference>
<sequence>MDKLIITGGARLDGEIRISGAKNSALPILAATLLCDGPVTVGNLPHLHDITTMIELFGRMGIEPVIDEKLSVEIDPRTIKTLIAPYELVKTMRASILVLGPMVARFGEAEVALPGGCAIGSRPVDLHIRGLEAMGAVIDVEGGYIKAKAPEGGLRGAHFFFDTVSVTGTENIMMAAALAKGRSVLQNAAREPEVVDLANFLNAMGAKVSGAGTDTITIDGVERLGSAFYKVMPDRIETGTYLVAAAVTGGRVKVKDTDPTILEAVLEKLREAGAEITCGEDWIELNMHGKRPKAVNVRTAPYPAFPTDMQAQFISLNAIAEGTGAVIETIFENRFMHVYELHRMGAHIQVEGNTAIVTGIETLKGAPVMATDLRASASLVISALVAQGDTLIDRIYHIDRGYECIEEKLQMLGAKIRRVPG</sequence>
<keyword id="KW-0131">Cell cycle</keyword>
<keyword id="KW-0132">Cell division</keyword>
<keyword id="KW-0133">Cell shape</keyword>
<keyword id="KW-0961">Cell wall biogenesis/degradation</keyword>
<keyword id="KW-0963">Cytoplasm</keyword>
<keyword id="KW-0573">Peptidoglycan synthesis</keyword>
<keyword id="KW-0670">Pyruvate</keyword>
<keyword id="KW-0808">Transferase</keyword>
<comment type="function">
    <text evidence="1">Cell wall formation. Adds enolpyruvyl to UDP-N-acetylglucosamine.</text>
</comment>
<comment type="catalytic activity">
    <reaction evidence="1">
        <text>phosphoenolpyruvate + UDP-N-acetyl-alpha-D-glucosamine = UDP-N-acetyl-3-O-(1-carboxyvinyl)-alpha-D-glucosamine + phosphate</text>
        <dbReference type="Rhea" id="RHEA:18681"/>
        <dbReference type="ChEBI" id="CHEBI:43474"/>
        <dbReference type="ChEBI" id="CHEBI:57705"/>
        <dbReference type="ChEBI" id="CHEBI:58702"/>
        <dbReference type="ChEBI" id="CHEBI:68483"/>
        <dbReference type="EC" id="2.5.1.7"/>
    </reaction>
</comment>
<comment type="pathway">
    <text evidence="1">Cell wall biogenesis; peptidoglycan biosynthesis.</text>
</comment>
<comment type="subcellular location">
    <subcellularLocation>
        <location evidence="1">Cytoplasm</location>
    </subcellularLocation>
</comment>
<comment type="similarity">
    <text evidence="1">Belongs to the EPSP synthase family. MurA subfamily.</text>
</comment>
<accession>Q3KHZ4</accession>
<organism>
    <name type="scientific">Pseudomonas fluorescens (strain Pf0-1)</name>
    <dbReference type="NCBI Taxonomy" id="205922"/>
    <lineage>
        <taxon>Bacteria</taxon>
        <taxon>Pseudomonadati</taxon>
        <taxon>Pseudomonadota</taxon>
        <taxon>Gammaproteobacteria</taxon>
        <taxon>Pseudomonadales</taxon>
        <taxon>Pseudomonadaceae</taxon>
        <taxon>Pseudomonas</taxon>
    </lineage>
</organism>
<gene>
    <name evidence="1" type="primary">murA</name>
    <name type="ordered locus">Pfl01_0869</name>
</gene>
<feature type="chain" id="PRO_0000231248" description="UDP-N-acetylglucosamine 1-carboxyvinyltransferase">
    <location>
        <begin position="1"/>
        <end position="421"/>
    </location>
</feature>
<feature type="active site" description="Proton donor" evidence="1">
    <location>
        <position position="117"/>
    </location>
</feature>
<feature type="binding site" evidence="1">
    <location>
        <begin position="22"/>
        <end position="23"/>
    </location>
    <ligand>
        <name>phosphoenolpyruvate</name>
        <dbReference type="ChEBI" id="CHEBI:58702"/>
    </ligand>
</feature>
<feature type="binding site" evidence="1">
    <location>
        <position position="93"/>
    </location>
    <ligand>
        <name>UDP-N-acetyl-alpha-D-glucosamine</name>
        <dbReference type="ChEBI" id="CHEBI:57705"/>
    </ligand>
</feature>
<feature type="binding site" evidence="1">
    <location>
        <begin position="122"/>
        <end position="126"/>
    </location>
    <ligand>
        <name>UDP-N-acetyl-alpha-D-glucosamine</name>
        <dbReference type="ChEBI" id="CHEBI:57705"/>
    </ligand>
</feature>
<feature type="binding site" evidence="1">
    <location>
        <position position="308"/>
    </location>
    <ligand>
        <name>UDP-N-acetyl-alpha-D-glucosamine</name>
        <dbReference type="ChEBI" id="CHEBI:57705"/>
    </ligand>
</feature>
<feature type="binding site" evidence="1">
    <location>
        <position position="330"/>
    </location>
    <ligand>
        <name>UDP-N-acetyl-alpha-D-glucosamine</name>
        <dbReference type="ChEBI" id="CHEBI:57705"/>
    </ligand>
</feature>
<feature type="modified residue" description="2-(S-cysteinyl)pyruvic acid O-phosphothioketal" evidence="1">
    <location>
        <position position="117"/>
    </location>
</feature>
<dbReference type="EC" id="2.5.1.7" evidence="1"/>
<dbReference type="EMBL" id="CP000094">
    <property type="protein sequence ID" value="ABA72612.1"/>
    <property type="molecule type" value="Genomic_DNA"/>
</dbReference>
<dbReference type="RefSeq" id="WP_007953555.1">
    <property type="nucleotide sequence ID" value="NC_007492.2"/>
</dbReference>
<dbReference type="SMR" id="Q3KHZ4"/>
<dbReference type="KEGG" id="pfo:Pfl01_0869"/>
<dbReference type="eggNOG" id="COG0766">
    <property type="taxonomic scope" value="Bacteria"/>
</dbReference>
<dbReference type="HOGENOM" id="CLU_027387_0_0_6"/>
<dbReference type="UniPathway" id="UPA00219"/>
<dbReference type="Proteomes" id="UP000002704">
    <property type="component" value="Chromosome"/>
</dbReference>
<dbReference type="GO" id="GO:0005737">
    <property type="term" value="C:cytoplasm"/>
    <property type="evidence" value="ECO:0007669"/>
    <property type="project" value="UniProtKB-SubCell"/>
</dbReference>
<dbReference type="GO" id="GO:0008760">
    <property type="term" value="F:UDP-N-acetylglucosamine 1-carboxyvinyltransferase activity"/>
    <property type="evidence" value="ECO:0007669"/>
    <property type="project" value="UniProtKB-UniRule"/>
</dbReference>
<dbReference type="GO" id="GO:0051301">
    <property type="term" value="P:cell division"/>
    <property type="evidence" value="ECO:0007669"/>
    <property type="project" value="UniProtKB-KW"/>
</dbReference>
<dbReference type="GO" id="GO:0071555">
    <property type="term" value="P:cell wall organization"/>
    <property type="evidence" value="ECO:0007669"/>
    <property type="project" value="UniProtKB-KW"/>
</dbReference>
<dbReference type="GO" id="GO:0009252">
    <property type="term" value="P:peptidoglycan biosynthetic process"/>
    <property type="evidence" value="ECO:0007669"/>
    <property type="project" value="UniProtKB-UniRule"/>
</dbReference>
<dbReference type="GO" id="GO:0008360">
    <property type="term" value="P:regulation of cell shape"/>
    <property type="evidence" value="ECO:0007669"/>
    <property type="project" value="UniProtKB-KW"/>
</dbReference>
<dbReference type="GO" id="GO:0019277">
    <property type="term" value="P:UDP-N-acetylgalactosamine biosynthetic process"/>
    <property type="evidence" value="ECO:0007669"/>
    <property type="project" value="InterPro"/>
</dbReference>
<dbReference type="CDD" id="cd01555">
    <property type="entry name" value="UdpNAET"/>
    <property type="match status" value="1"/>
</dbReference>
<dbReference type="FunFam" id="3.65.10.10:FF:000001">
    <property type="entry name" value="UDP-N-acetylglucosamine 1-carboxyvinyltransferase"/>
    <property type="match status" value="1"/>
</dbReference>
<dbReference type="FunFam" id="3.65.10.10:FF:000002">
    <property type="entry name" value="UDP-N-acetylglucosamine 1-carboxyvinyltransferase"/>
    <property type="match status" value="1"/>
</dbReference>
<dbReference type="Gene3D" id="3.65.10.10">
    <property type="entry name" value="Enolpyruvate transferase domain"/>
    <property type="match status" value="2"/>
</dbReference>
<dbReference type="HAMAP" id="MF_00111">
    <property type="entry name" value="MurA"/>
    <property type="match status" value="1"/>
</dbReference>
<dbReference type="InterPro" id="IPR001986">
    <property type="entry name" value="Enolpyruvate_Tfrase_dom"/>
</dbReference>
<dbReference type="InterPro" id="IPR036968">
    <property type="entry name" value="Enolpyruvate_Tfrase_sf"/>
</dbReference>
<dbReference type="InterPro" id="IPR050068">
    <property type="entry name" value="MurA_subfamily"/>
</dbReference>
<dbReference type="InterPro" id="IPR013792">
    <property type="entry name" value="RNA3'P_cycl/enolpyr_Trfase_a/b"/>
</dbReference>
<dbReference type="InterPro" id="IPR005750">
    <property type="entry name" value="UDP_GlcNAc_COvinyl_MurA"/>
</dbReference>
<dbReference type="NCBIfam" id="TIGR01072">
    <property type="entry name" value="murA"/>
    <property type="match status" value="1"/>
</dbReference>
<dbReference type="NCBIfam" id="NF006873">
    <property type="entry name" value="PRK09369.1"/>
    <property type="match status" value="1"/>
</dbReference>
<dbReference type="PANTHER" id="PTHR43783">
    <property type="entry name" value="UDP-N-ACETYLGLUCOSAMINE 1-CARBOXYVINYLTRANSFERASE"/>
    <property type="match status" value="1"/>
</dbReference>
<dbReference type="PANTHER" id="PTHR43783:SF1">
    <property type="entry name" value="UDP-N-ACETYLGLUCOSAMINE 1-CARBOXYVINYLTRANSFERASE"/>
    <property type="match status" value="1"/>
</dbReference>
<dbReference type="Pfam" id="PF00275">
    <property type="entry name" value="EPSP_synthase"/>
    <property type="match status" value="1"/>
</dbReference>
<dbReference type="SUPFAM" id="SSF55205">
    <property type="entry name" value="EPT/RTPC-like"/>
    <property type="match status" value="1"/>
</dbReference>